<organism>
    <name type="scientific">Dictyostelium discoideum</name>
    <name type="common">Social amoeba</name>
    <dbReference type="NCBI Taxonomy" id="44689"/>
    <lineage>
        <taxon>Eukaryota</taxon>
        <taxon>Amoebozoa</taxon>
        <taxon>Evosea</taxon>
        <taxon>Eumycetozoa</taxon>
        <taxon>Dictyostelia</taxon>
        <taxon>Dictyosteliales</taxon>
        <taxon>Dictyosteliaceae</taxon>
        <taxon>Dictyostelium</taxon>
    </lineage>
</organism>
<name>MCTS1_DICDI</name>
<accession>Q86KL4</accession>
<accession>Q55AD8</accession>
<evidence type="ECO:0000250" key="1"/>
<evidence type="ECO:0000255" key="2">
    <source>
        <dbReference type="PROSITE-ProRule" id="PRU00161"/>
    </source>
</evidence>
<evidence type="ECO:0000305" key="3"/>
<feature type="chain" id="PRO_0000349103" description="Malignant T-cell-amplified sequence 1 homolog">
    <location>
        <begin position="1"/>
        <end position="182"/>
    </location>
</feature>
<feature type="domain" description="PUA" evidence="2">
    <location>
        <begin position="92"/>
        <end position="172"/>
    </location>
</feature>
<proteinExistence type="inferred from homology"/>
<gene>
    <name type="primary">mcts1</name>
    <name type="ORF">DDB_G0271910</name>
</gene>
<comment type="function">
    <text evidence="1">May play a role in cell cycle regulation. May play a role as translation enhancer by binding to the cap complex of the 5'-terminus of mRNAs (By similarity).</text>
</comment>
<comment type="subcellular location">
    <subcellularLocation>
        <location evidence="1">Cytoplasm</location>
    </subcellularLocation>
</comment>
<comment type="domain">
    <text evidence="1">The PUA RNA-binding domain is critical for cap binding, but not sufficient for translation enhancer function. MCT1 N-terminal region is required to enhance translation possibly through interaction with other proteins (By similarity).</text>
</comment>
<comment type="similarity">
    <text evidence="3">Belongs to the MCTS1 family.</text>
</comment>
<reference key="1">
    <citation type="journal article" date="2002" name="Nature">
        <title>Sequence and analysis of chromosome 2 of Dictyostelium discoideum.</title>
        <authorList>
            <person name="Gloeckner G."/>
            <person name="Eichinger L."/>
            <person name="Szafranski K."/>
            <person name="Pachebat J.A."/>
            <person name="Bankier A.T."/>
            <person name="Dear P.H."/>
            <person name="Lehmann R."/>
            <person name="Baumgart C."/>
            <person name="Parra G."/>
            <person name="Abril J.F."/>
            <person name="Guigo R."/>
            <person name="Kumpf K."/>
            <person name="Tunggal B."/>
            <person name="Cox E.C."/>
            <person name="Quail M.A."/>
            <person name="Platzer M."/>
            <person name="Rosenthal A."/>
            <person name="Noegel A.A."/>
        </authorList>
    </citation>
    <scope>NUCLEOTIDE SEQUENCE [LARGE SCALE GENOMIC DNA]</scope>
    <source>
        <strain>AX4</strain>
    </source>
</reference>
<reference key="2">
    <citation type="journal article" date="2005" name="Nature">
        <title>The genome of the social amoeba Dictyostelium discoideum.</title>
        <authorList>
            <person name="Eichinger L."/>
            <person name="Pachebat J.A."/>
            <person name="Gloeckner G."/>
            <person name="Rajandream M.A."/>
            <person name="Sucgang R."/>
            <person name="Berriman M."/>
            <person name="Song J."/>
            <person name="Olsen R."/>
            <person name="Szafranski K."/>
            <person name="Xu Q."/>
            <person name="Tunggal B."/>
            <person name="Kummerfeld S."/>
            <person name="Madera M."/>
            <person name="Konfortov B.A."/>
            <person name="Rivero F."/>
            <person name="Bankier A.T."/>
            <person name="Lehmann R."/>
            <person name="Hamlin N."/>
            <person name="Davies R."/>
            <person name="Gaudet P."/>
            <person name="Fey P."/>
            <person name="Pilcher K."/>
            <person name="Chen G."/>
            <person name="Saunders D."/>
            <person name="Sodergren E.J."/>
            <person name="Davis P."/>
            <person name="Kerhornou A."/>
            <person name="Nie X."/>
            <person name="Hall N."/>
            <person name="Anjard C."/>
            <person name="Hemphill L."/>
            <person name="Bason N."/>
            <person name="Farbrother P."/>
            <person name="Desany B."/>
            <person name="Just E."/>
            <person name="Morio T."/>
            <person name="Rost R."/>
            <person name="Churcher C.M."/>
            <person name="Cooper J."/>
            <person name="Haydock S."/>
            <person name="van Driessche N."/>
            <person name="Cronin A."/>
            <person name="Goodhead I."/>
            <person name="Muzny D.M."/>
            <person name="Mourier T."/>
            <person name="Pain A."/>
            <person name="Lu M."/>
            <person name="Harper D."/>
            <person name="Lindsay R."/>
            <person name="Hauser H."/>
            <person name="James K.D."/>
            <person name="Quiles M."/>
            <person name="Madan Babu M."/>
            <person name="Saito T."/>
            <person name="Buchrieser C."/>
            <person name="Wardroper A."/>
            <person name="Felder M."/>
            <person name="Thangavelu M."/>
            <person name="Johnson D."/>
            <person name="Knights A."/>
            <person name="Loulseged H."/>
            <person name="Mungall K.L."/>
            <person name="Oliver K."/>
            <person name="Price C."/>
            <person name="Quail M.A."/>
            <person name="Urushihara H."/>
            <person name="Hernandez J."/>
            <person name="Rabbinowitsch E."/>
            <person name="Steffen D."/>
            <person name="Sanders M."/>
            <person name="Ma J."/>
            <person name="Kohara Y."/>
            <person name="Sharp S."/>
            <person name="Simmonds M.N."/>
            <person name="Spiegler S."/>
            <person name="Tivey A."/>
            <person name="Sugano S."/>
            <person name="White B."/>
            <person name="Walker D."/>
            <person name="Woodward J.R."/>
            <person name="Winckler T."/>
            <person name="Tanaka Y."/>
            <person name="Shaulsky G."/>
            <person name="Schleicher M."/>
            <person name="Weinstock G.M."/>
            <person name="Rosenthal A."/>
            <person name="Cox E.C."/>
            <person name="Chisholm R.L."/>
            <person name="Gibbs R.A."/>
            <person name="Loomis W.F."/>
            <person name="Platzer M."/>
            <person name="Kay R.R."/>
            <person name="Williams J.G."/>
            <person name="Dear P.H."/>
            <person name="Noegel A.A."/>
            <person name="Barrell B.G."/>
            <person name="Kuspa A."/>
        </authorList>
    </citation>
    <scope>NUCLEOTIDE SEQUENCE [LARGE SCALE GENOMIC DNA]</scope>
    <source>
        <strain>AX4</strain>
    </source>
</reference>
<keyword id="KW-0131">Cell cycle</keyword>
<keyword id="KW-0963">Cytoplasm</keyword>
<keyword id="KW-1185">Reference proteome</keyword>
<keyword id="KW-0804">Transcription</keyword>
<keyword id="KW-0805">Transcription regulation</keyword>
<dbReference type="EMBL" id="AAFI02000007">
    <property type="protein sequence ID" value="EAL71479.1"/>
    <property type="molecule type" value="Genomic_DNA"/>
</dbReference>
<dbReference type="RefSeq" id="XP_645418.1">
    <property type="nucleotide sequence ID" value="XM_640326.1"/>
</dbReference>
<dbReference type="SMR" id="Q86KL4"/>
<dbReference type="FunCoup" id="Q86KL4">
    <property type="interactions" value="620"/>
</dbReference>
<dbReference type="STRING" id="44689.Q86KL4"/>
<dbReference type="PaxDb" id="44689-DDB0168553"/>
<dbReference type="EnsemblProtists" id="EAL71479">
    <property type="protein sequence ID" value="EAL71479"/>
    <property type="gene ID" value="DDB_G0271910"/>
</dbReference>
<dbReference type="GeneID" id="8618202"/>
<dbReference type="KEGG" id="ddi:DDB_G0271910"/>
<dbReference type="dictyBase" id="DDB_G0271910"/>
<dbReference type="VEuPathDB" id="AmoebaDB:DDB_G0271910"/>
<dbReference type="eggNOG" id="KOG2523">
    <property type="taxonomic scope" value="Eukaryota"/>
</dbReference>
<dbReference type="HOGENOM" id="CLU_090468_0_1_1"/>
<dbReference type="InParanoid" id="Q86KL4"/>
<dbReference type="OMA" id="GVENIHY"/>
<dbReference type="PhylomeDB" id="Q86KL4"/>
<dbReference type="PRO" id="PR:Q86KL4"/>
<dbReference type="Proteomes" id="UP000002195">
    <property type="component" value="Chromosome 2"/>
</dbReference>
<dbReference type="GO" id="GO:0005737">
    <property type="term" value="C:cytoplasm"/>
    <property type="evidence" value="ECO:0007669"/>
    <property type="project" value="UniProtKB-SubCell"/>
</dbReference>
<dbReference type="GO" id="GO:0003723">
    <property type="term" value="F:RNA binding"/>
    <property type="evidence" value="ECO:0007669"/>
    <property type="project" value="InterPro"/>
</dbReference>
<dbReference type="GO" id="GO:0001731">
    <property type="term" value="P:formation of translation preinitiation complex"/>
    <property type="evidence" value="ECO:0000318"/>
    <property type="project" value="GO_Central"/>
</dbReference>
<dbReference type="CDD" id="cd11609">
    <property type="entry name" value="MCT1_N"/>
    <property type="match status" value="1"/>
</dbReference>
<dbReference type="CDD" id="cd21155">
    <property type="entry name" value="PUA_MCTS-1-like"/>
    <property type="match status" value="1"/>
</dbReference>
<dbReference type="FunFam" id="3.10.400.20:FF:000001">
    <property type="entry name" value="Malignant T-cell-amplified sequence 1"/>
    <property type="match status" value="1"/>
</dbReference>
<dbReference type="Gene3D" id="3.10.400.20">
    <property type="match status" value="1"/>
</dbReference>
<dbReference type="InterPro" id="IPR016437">
    <property type="entry name" value="MCT-1/Tma20"/>
</dbReference>
<dbReference type="InterPro" id="IPR041366">
    <property type="entry name" value="Pre-PUA"/>
</dbReference>
<dbReference type="InterPro" id="IPR002478">
    <property type="entry name" value="PUA"/>
</dbReference>
<dbReference type="InterPro" id="IPR015947">
    <property type="entry name" value="PUA-like_sf"/>
</dbReference>
<dbReference type="InterPro" id="IPR004521">
    <property type="entry name" value="Uncharacterised_CHP00451"/>
</dbReference>
<dbReference type="NCBIfam" id="TIGR00451">
    <property type="entry name" value="unchar_dom_2"/>
    <property type="match status" value="1"/>
</dbReference>
<dbReference type="PANTHER" id="PTHR22798:SF0">
    <property type="entry name" value="MALIGNANT T-CELL-AMPLIFIED SEQUENCE 1"/>
    <property type="match status" value="1"/>
</dbReference>
<dbReference type="PANTHER" id="PTHR22798">
    <property type="entry name" value="MCT-1 PROTEIN"/>
    <property type="match status" value="1"/>
</dbReference>
<dbReference type="Pfam" id="PF17832">
    <property type="entry name" value="Pre-PUA"/>
    <property type="match status" value="1"/>
</dbReference>
<dbReference type="Pfam" id="PF01472">
    <property type="entry name" value="PUA"/>
    <property type="match status" value="1"/>
</dbReference>
<dbReference type="PIRSF" id="PIRSF005067">
    <property type="entry name" value="Tma_RNA-bind_prd"/>
    <property type="match status" value="1"/>
</dbReference>
<dbReference type="SMART" id="SM00359">
    <property type="entry name" value="PUA"/>
    <property type="match status" value="1"/>
</dbReference>
<dbReference type="SUPFAM" id="SSF88697">
    <property type="entry name" value="PUA domain-like"/>
    <property type="match status" value="1"/>
</dbReference>
<dbReference type="PROSITE" id="PS50890">
    <property type="entry name" value="PUA"/>
    <property type="match status" value="1"/>
</dbReference>
<protein>
    <recommendedName>
        <fullName>Malignant T-cell-amplified sequence 1 homolog</fullName>
        <shortName>MCT-1</shortName>
    </recommendedName>
</protein>
<sequence length="182" mass="20422">MFKKLSLKGSSNTNNQIKSSLQRNIKNSILAQYPKLKDIEEDVFPKKVPIVQVKCQNHINLVLINNEVLFFNEREGPYYPTLRFLHKYPNILPHVQVDKGAIKFVLQGANIMCRGLTSPGAKMEVDLPVDAIVAVMAEGKDHASAIGVMKMSTNDIRTINNDIGINNIHYLGDSLYMSPNLE</sequence>